<reference key="1">
    <citation type="journal article" date="2016" name="Stand. Genomic Sci.">
        <title>Complete genome sequence of the Antarctic Halorubrum lacusprofundi type strain ACAM 34.</title>
        <authorList>
            <person name="Anderson I.J."/>
            <person name="DasSarma P."/>
            <person name="Lucas S."/>
            <person name="Copeland A."/>
            <person name="Lapidus A."/>
            <person name="Del Rio T.G."/>
            <person name="Tice H."/>
            <person name="Dalin E."/>
            <person name="Bruce D.C."/>
            <person name="Goodwin L."/>
            <person name="Pitluck S."/>
            <person name="Sims D."/>
            <person name="Brettin T.S."/>
            <person name="Detter J.C."/>
            <person name="Han C.S."/>
            <person name="Larimer F."/>
            <person name="Hauser L."/>
            <person name="Land M."/>
            <person name="Ivanova N."/>
            <person name="Richardson P."/>
            <person name="Cavicchioli R."/>
            <person name="DasSarma S."/>
            <person name="Woese C.R."/>
            <person name="Kyrpides N.C."/>
        </authorList>
    </citation>
    <scope>NUCLEOTIDE SEQUENCE [LARGE SCALE GENOMIC DNA]</scope>
    <source>
        <strain>ATCC 49239 / DSM 5036 / JCM 8891 / ACAM 34</strain>
    </source>
</reference>
<name>DCD_HALLT</name>
<feature type="chain" id="PRO_1000123148" description="dCTP deaminase">
    <location>
        <begin position="1"/>
        <end position="203"/>
    </location>
</feature>
<feature type="region of interest" description="Disordered" evidence="2">
    <location>
        <begin position="164"/>
        <end position="203"/>
    </location>
</feature>
<feature type="compositionally biased region" description="Basic and acidic residues" evidence="2">
    <location>
        <begin position="166"/>
        <end position="176"/>
    </location>
</feature>
<feature type="compositionally biased region" description="Basic and acidic residues" evidence="2">
    <location>
        <begin position="187"/>
        <end position="203"/>
    </location>
</feature>
<feature type="active site" description="Proton donor/acceptor" evidence="1">
    <location>
        <position position="133"/>
    </location>
</feature>
<feature type="binding site" evidence="1">
    <location>
        <begin position="105"/>
        <end position="110"/>
    </location>
    <ligand>
        <name>dCTP</name>
        <dbReference type="ChEBI" id="CHEBI:61481"/>
    </ligand>
</feature>
<feature type="binding site" evidence="1">
    <location>
        <position position="123"/>
    </location>
    <ligand>
        <name>dCTP</name>
        <dbReference type="ChEBI" id="CHEBI:61481"/>
    </ligand>
</feature>
<feature type="binding site" evidence="1">
    <location>
        <begin position="131"/>
        <end position="133"/>
    </location>
    <ligand>
        <name>dCTP</name>
        <dbReference type="ChEBI" id="CHEBI:61481"/>
    </ligand>
</feature>
<feature type="binding site" evidence="1">
    <location>
        <position position="152"/>
    </location>
    <ligand>
        <name>dCTP</name>
        <dbReference type="ChEBI" id="CHEBI:61481"/>
    </ligand>
</feature>
<feature type="binding site" evidence="1">
    <location>
        <position position="166"/>
    </location>
    <ligand>
        <name>dCTP</name>
        <dbReference type="ChEBI" id="CHEBI:61481"/>
    </ligand>
</feature>
<feature type="binding site" evidence="1">
    <location>
        <position position="173"/>
    </location>
    <ligand>
        <name>dCTP</name>
        <dbReference type="ChEBI" id="CHEBI:61481"/>
    </ligand>
</feature>
<feature type="binding site" evidence="1">
    <location>
        <position position="177"/>
    </location>
    <ligand>
        <name>dCTP</name>
        <dbReference type="ChEBI" id="CHEBI:61481"/>
    </ligand>
</feature>
<keyword id="KW-0378">Hydrolase</keyword>
<keyword id="KW-0546">Nucleotide metabolism</keyword>
<keyword id="KW-0547">Nucleotide-binding</keyword>
<keyword id="KW-1185">Reference proteome</keyword>
<organism>
    <name type="scientific">Halorubrum lacusprofundi (strain ATCC 49239 / DSM 5036 / JCM 8891 / ACAM 34)</name>
    <dbReference type="NCBI Taxonomy" id="416348"/>
    <lineage>
        <taxon>Archaea</taxon>
        <taxon>Methanobacteriati</taxon>
        <taxon>Methanobacteriota</taxon>
        <taxon>Stenosarchaea group</taxon>
        <taxon>Halobacteria</taxon>
        <taxon>Halobacteriales</taxon>
        <taxon>Haloferacaceae</taxon>
        <taxon>Halorubrum</taxon>
    </lineage>
</organism>
<proteinExistence type="inferred from homology"/>
<sequence length="203" mass="22142">MILSDADILDRLAEGDLVVEPLDDVDQQVQPASVDLRLGERFLEFQRTNIPCIHPTEADEVGDYVTETRVPEGEEFILHPGDFVLGTTTERVEIPPDLLATVQGRSSLGRLAIVIHATAGIVDPGYKGQITLELSNLGTAPVALTPGMRVSQLIFTELKSPAKRPYGVERGSKYQDQDGPQASRIGSDPEFHSDENQAAEHES</sequence>
<gene>
    <name evidence="1" type="primary">dcd</name>
    <name type="ordered locus">Hlac_0445</name>
</gene>
<accession>B9LSY2</accession>
<comment type="function">
    <text evidence="1">Catalyzes the deamination of dCTP to dUTP.</text>
</comment>
<comment type="catalytic activity">
    <reaction evidence="1">
        <text>dCTP + H2O + H(+) = dUTP + NH4(+)</text>
        <dbReference type="Rhea" id="RHEA:22680"/>
        <dbReference type="ChEBI" id="CHEBI:15377"/>
        <dbReference type="ChEBI" id="CHEBI:15378"/>
        <dbReference type="ChEBI" id="CHEBI:28938"/>
        <dbReference type="ChEBI" id="CHEBI:61481"/>
        <dbReference type="ChEBI" id="CHEBI:61555"/>
        <dbReference type="EC" id="3.5.4.13"/>
    </reaction>
</comment>
<comment type="pathway">
    <text evidence="1">Pyrimidine metabolism; dUMP biosynthesis; dUMP from dCTP (dUTP route): step 1/2.</text>
</comment>
<comment type="subunit">
    <text evidence="1">Homotrimer.</text>
</comment>
<comment type="similarity">
    <text evidence="1">Belongs to the dCTP deaminase family.</text>
</comment>
<protein>
    <recommendedName>
        <fullName evidence="1">dCTP deaminase</fullName>
        <ecNumber evidence="1">3.5.4.13</ecNumber>
    </recommendedName>
    <alternativeName>
        <fullName evidence="1">Deoxycytidine triphosphate deaminase</fullName>
    </alternativeName>
</protein>
<evidence type="ECO:0000255" key="1">
    <source>
        <dbReference type="HAMAP-Rule" id="MF_00146"/>
    </source>
</evidence>
<evidence type="ECO:0000256" key="2">
    <source>
        <dbReference type="SAM" id="MobiDB-lite"/>
    </source>
</evidence>
<dbReference type="EC" id="3.5.4.13" evidence="1"/>
<dbReference type="EMBL" id="CP001365">
    <property type="protein sequence ID" value="ACM56047.1"/>
    <property type="molecule type" value="Genomic_DNA"/>
</dbReference>
<dbReference type="RefSeq" id="WP_012659682.1">
    <property type="nucleotide sequence ID" value="NC_012029.1"/>
</dbReference>
<dbReference type="SMR" id="B9LSY2"/>
<dbReference type="GeneID" id="7401063"/>
<dbReference type="KEGG" id="hla:Hlac_0445"/>
<dbReference type="eggNOG" id="arCOG04048">
    <property type="taxonomic scope" value="Archaea"/>
</dbReference>
<dbReference type="HOGENOM" id="CLU_087476_2_1_2"/>
<dbReference type="UniPathway" id="UPA00610">
    <property type="reaction ID" value="UER00665"/>
</dbReference>
<dbReference type="Proteomes" id="UP000000740">
    <property type="component" value="Chromosome 1"/>
</dbReference>
<dbReference type="GO" id="GO:0008829">
    <property type="term" value="F:dCTP deaminase activity"/>
    <property type="evidence" value="ECO:0007669"/>
    <property type="project" value="UniProtKB-UniRule"/>
</dbReference>
<dbReference type="GO" id="GO:0000166">
    <property type="term" value="F:nucleotide binding"/>
    <property type="evidence" value="ECO:0007669"/>
    <property type="project" value="UniProtKB-KW"/>
</dbReference>
<dbReference type="GO" id="GO:0006226">
    <property type="term" value="P:dUMP biosynthetic process"/>
    <property type="evidence" value="ECO:0007669"/>
    <property type="project" value="UniProtKB-UniPathway"/>
</dbReference>
<dbReference type="GO" id="GO:0006229">
    <property type="term" value="P:dUTP biosynthetic process"/>
    <property type="evidence" value="ECO:0007669"/>
    <property type="project" value="UniProtKB-UniRule"/>
</dbReference>
<dbReference type="GO" id="GO:0015949">
    <property type="term" value="P:nucleobase-containing small molecule interconversion"/>
    <property type="evidence" value="ECO:0007669"/>
    <property type="project" value="TreeGrafter"/>
</dbReference>
<dbReference type="CDD" id="cd07557">
    <property type="entry name" value="trimeric_dUTPase"/>
    <property type="match status" value="1"/>
</dbReference>
<dbReference type="FunFam" id="2.70.40.10:FF:000005">
    <property type="entry name" value="dCTP deaminase, dUMP-forming"/>
    <property type="match status" value="1"/>
</dbReference>
<dbReference type="Gene3D" id="2.70.40.10">
    <property type="match status" value="1"/>
</dbReference>
<dbReference type="HAMAP" id="MF_00146">
    <property type="entry name" value="dCTP_deaminase"/>
    <property type="match status" value="1"/>
</dbReference>
<dbReference type="InterPro" id="IPR011962">
    <property type="entry name" value="dCTP_deaminase"/>
</dbReference>
<dbReference type="InterPro" id="IPR036157">
    <property type="entry name" value="dUTPase-like_sf"/>
</dbReference>
<dbReference type="InterPro" id="IPR033704">
    <property type="entry name" value="dUTPase_trimeric"/>
</dbReference>
<dbReference type="NCBIfam" id="TIGR02274">
    <property type="entry name" value="dCTP_deam"/>
    <property type="match status" value="1"/>
</dbReference>
<dbReference type="PANTHER" id="PTHR42680">
    <property type="entry name" value="DCTP DEAMINASE"/>
    <property type="match status" value="1"/>
</dbReference>
<dbReference type="PANTHER" id="PTHR42680:SF3">
    <property type="entry name" value="DCTP DEAMINASE"/>
    <property type="match status" value="1"/>
</dbReference>
<dbReference type="Pfam" id="PF22769">
    <property type="entry name" value="DCD"/>
    <property type="match status" value="1"/>
</dbReference>
<dbReference type="SUPFAM" id="SSF51283">
    <property type="entry name" value="dUTPase-like"/>
    <property type="match status" value="1"/>
</dbReference>